<keyword id="KW-0285">Flavoprotein</keyword>
<keyword id="KW-0288">FMN</keyword>
<keyword id="KW-0520">NAD</keyword>
<keyword id="KW-0560">Oxidoreductase</keyword>
<keyword id="KW-1185">Reference proteome</keyword>
<protein>
    <recommendedName>
        <fullName evidence="1">FMN reductase (NADH) RutF</fullName>
        <ecNumber evidence="1">1.5.1.42</ecNumber>
    </recommendedName>
    <alternativeName>
        <fullName evidence="1">FMN reductase</fullName>
    </alternativeName>
    <alternativeName>
        <fullName evidence="1">NADH-flavin reductase RutF</fullName>
    </alternativeName>
    <alternativeName>
        <fullName evidence="1">NADH:flavin oxidoreductase</fullName>
    </alternativeName>
</protein>
<sequence length="174" mass="18366">MQLAQCETTSQFSAPVIREDYRDAMARLAAAVNIITTDGPSGRAGFTATAVCSVTDEPPTLLVCLNRSASAHPIVTANGQLCVNTLAGAQRDLSNLFGGKTPMAERFAAAQWSTGVTGSPLLDGATVSFDCRISHSASVGTHDILYCEVLAVYRRDSSDALVYFGRNYHGLSSS</sequence>
<proteinExistence type="inferred from homology"/>
<gene>
    <name evidence="1" type="primary">rutF</name>
    <name type="ordered locus">PST_3602</name>
</gene>
<evidence type="ECO:0000255" key="1">
    <source>
        <dbReference type="HAMAP-Rule" id="MF_00833"/>
    </source>
</evidence>
<feature type="chain" id="PRO_0000403039" description="FMN reductase (NADH) RutF">
    <location>
        <begin position="1"/>
        <end position="174"/>
    </location>
</feature>
<dbReference type="EC" id="1.5.1.42" evidence="1"/>
<dbReference type="EMBL" id="CP000304">
    <property type="protein sequence ID" value="ABP81230.1"/>
    <property type="molecule type" value="Genomic_DNA"/>
</dbReference>
<dbReference type="RefSeq" id="WP_011914624.1">
    <property type="nucleotide sequence ID" value="NC_009434.1"/>
</dbReference>
<dbReference type="SMR" id="A4VQH9"/>
<dbReference type="KEGG" id="psa:PST_3602"/>
<dbReference type="eggNOG" id="COG1853">
    <property type="taxonomic scope" value="Bacteria"/>
</dbReference>
<dbReference type="HOGENOM" id="CLU_059021_2_2_6"/>
<dbReference type="Proteomes" id="UP000000233">
    <property type="component" value="Chromosome"/>
</dbReference>
<dbReference type="GO" id="GO:0010181">
    <property type="term" value="F:FMN binding"/>
    <property type="evidence" value="ECO:0007669"/>
    <property type="project" value="InterPro"/>
</dbReference>
<dbReference type="GO" id="GO:0052874">
    <property type="term" value="F:FMN reductase (NADH) activity"/>
    <property type="evidence" value="ECO:0007669"/>
    <property type="project" value="UniProtKB-EC"/>
</dbReference>
<dbReference type="GO" id="GO:0008752">
    <property type="term" value="F:FMN reductase [NAD(P)H] activity"/>
    <property type="evidence" value="ECO:0007669"/>
    <property type="project" value="InterPro"/>
</dbReference>
<dbReference type="GO" id="GO:0042602">
    <property type="term" value="F:riboflavin reductase (NADPH) activity"/>
    <property type="evidence" value="ECO:0007669"/>
    <property type="project" value="UniProtKB-UniRule"/>
</dbReference>
<dbReference type="GO" id="GO:0019740">
    <property type="term" value="P:nitrogen utilization"/>
    <property type="evidence" value="ECO:0007669"/>
    <property type="project" value="UniProtKB-UniRule"/>
</dbReference>
<dbReference type="GO" id="GO:0006212">
    <property type="term" value="P:uracil catabolic process"/>
    <property type="evidence" value="ECO:0007669"/>
    <property type="project" value="UniProtKB-UniRule"/>
</dbReference>
<dbReference type="Gene3D" id="2.30.110.10">
    <property type="entry name" value="Electron Transport, Fmn-binding Protein, Chain A"/>
    <property type="match status" value="1"/>
</dbReference>
<dbReference type="HAMAP" id="MF_00833">
    <property type="entry name" value="RutF"/>
    <property type="match status" value="1"/>
</dbReference>
<dbReference type="InterPro" id="IPR002563">
    <property type="entry name" value="Flavin_Rdtase-like_dom"/>
</dbReference>
<dbReference type="InterPro" id="IPR050268">
    <property type="entry name" value="NADH-dep_flavin_reductase"/>
</dbReference>
<dbReference type="InterPro" id="IPR019917">
    <property type="entry name" value="RutF"/>
</dbReference>
<dbReference type="InterPro" id="IPR012349">
    <property type="entry name" value="Split_barrel_FMN-bd"/>
</dbReference>
<dbReference type="NCBIfam" id="TIGR03615">
    <property type="entry name" value="RutF"/>
    <property type="match status" value="1"/>
</dbReference>
<dbReference type="PANTHER" id="PTHR30466">
    <property type="entry name" value="FLAVIN REDUCTASE"/>
    <property type="match status" value="1"/>
</dbReference>
<dbReference type="PANTHER" id="PTHR30466:SF1">
    <property type="entry name" value="FMN REDUCTASE (NADH) RUTF"/>
    <property type="match status" value="1"/>
</dbReference>
<dbReference type="Pfam" id="PF01613">
    <property type="entry name" value="Flavin_Reduct"/>
    <property type="match status" value="1"/>
</dbReference>
<dbReference type="SMART" id="SM00903">
    <property type="entry name" value="Flavin_Reduct"/>
    <property type="match status" value="1"/>
</dbReference>
<dbReference type="SUPFAM" id="SSF50475">
    <property type="entry name" value="FMN-binding split barrel"/>
    <property type="match status" value="1"/>
</dbReference>
<name>RUTF_STUS1</name>
<accession>A4VQH9</accession>
<comment type="function">
    <text evidence="1">Catalyzes the reduction of FMN to FMNH2 which is used to reduce pyrimidine by RutA via the Rut pathway.</text>
</comment>
<comment type="catalytic activity">
    <reaction evidence="1">
        <text>FMNH2 + NAD(+) = FMN + NADH + 2 H(+)</text>
        <dbReference type="Rhea" id="RHEA:21620"/>
        <dbReference type="ChEBI" id="CHEBI:15378"/>
        <dbReference type="ChEBI" id="CHEBI:57540"/>
        <dbReference type="ChEBI" id="CHEBI:57618"/>
        <dbReference type="ChEBI" id="CHEBI:57945"/>
        <dbReference type="ChEBI" id="CHEBI:58210"/>
        <dbReference type="EC" id="1.5.1.42"/>
    </reaction>
</comment>
<comment type="similarity">
    <text evidence="1">Belongs to the non-flavoprotein flavin reductase family. RutF subfamily.</text>
</comment>
<organism>
    <name type="scientific">Stutzerimonas stutzeri (strain A1501)</name>
    <name type="common">Pseudomonas stutzeri</name>
    <dbReference type="NCBI Taxonomy" id="379731"/>
    <lineage>
        <taxon>Bacteria</taxon>
        <taxon>Pseudomonadati</taxon>
        <taxon>Pseudomonadota</taxon>
        <taxon>Gammaproteobacteria</taxon>
        <taxon>Pseudomonadales</taxon>
        <taxon>Pseudomonadaceae</taxon>
        <taxon>Stutzerimonas</taxon>
    </lineage>
</organism>
<reference key="1">
    <citation type="journal article" date="2008" name="Proc. Natl. Acad. Sci. U.S.A.">
        <title>Nitrogen fixation island and rhizosphere competence traits in the genome of root-associated Pseudomonas stutzeri A1501.</title>
        <authorList>
            <person name="Yan Y."/>
            <person name="Yang J."/>
            <person name="Dou Y."/>
            <person name="Chen M."/>
            <person name="Ping S."/>
            <person name="Peng J."/>
            <person name="Lu W."/>
            <person name="Zhang W."/>
            <person name="Yao Z."/>
            <person name="Li H."/>
            <person name="Liu W."/>
            <person name="He S."/>
            <person name="Geng L."/>
            <person name="Zhang X."/>
            <person name="Yang F."/>
            <person name="Yu H."/>
            <person name="Zhan Y."/>
            <person name="Li D."/>
            <person name="Lin Z."/>
            <person name="Wang Y."/>
            <person name="Elmerich C."/>
            <person name="Lin M."/>
            <person name="Jin Q."/>
        </authorList>
    </citation>
    <scope>NUCLEOTIDE SEQUENCE [LARGE SCALE GENOMIC DNA]</scope>
    <source>
        <strain>A1501</strain>
    </source>
</reference>